<accession>Q3Z7V7</accession>
<keyword id="KW-0687">Ribonucleoprotein</keyword>
<keyword id="KW-0689">Ribosomal protein</keyword>
<keyword id="KW-0694">RNA-binding</keyword>
<keyword id="KW-0699">rRNA-binding</keyword>
<dbReference type="EMBL" id="CP000027">
    <property type="protein sequence ID" value="AAW39725.1"/>
    <property type="molecule type" value="Genomic_DNA"/>
</dbReference>
<dbReference type="RefSeq" id="WP_010936671.1">
    <property type="nucleotide sequence ID" value="NC_002936.3"/>
</dbReference>
<dbReference type="SMR" id="Q3Z7V7"/>
<dbReference type="FunCoup" id="Q3Z7V7">
    <property type="interactions" value="311"/>
</dbReference>
<dbReference type="STRING" id="243164.DET0969"/>
<dbReference type="GeneID" id="3229687"/>
<dbReference type="KEGG" id="det:DET0969"/>
<dbReference type="eggNOG" id="COG0184">
    <property type="taxonomic scope" value="Bacteria"/>
</dbReference>
<dbReference type="HOGENOM" id="CLU_148518_0_1_0"/>
<dbReference type="InParanoid" id="Q3Z7V7"/>
<dbReference type="Proteomes" id="UP000008289">
    <property type="component" value="Chromosome"/>
</dbReference>
<dbReference type="GO" id="GO:0022627">
    <property type="term" value="C:cytosolic small ribosomal subunit"/>
    <property type="evidence" value="ECO:0007669"/>
    <property type="project" value="TreeGrafter"/>
</dbReference>
<dbReference type="GO" id="GO:0019843">
    <property type="term" value="F:rRNA binding"/>
    <property type="evidence" value="ECO:0007669"/>
    <property type="project" value="UniProtKB-UniRule"/>
</dbReference>
<dbReference type="GO" id="GO:0003735">
    <property type="term" value="F:structural constituent of ribosome"/>
    <property type="evidence" value="ECO:0007669"/>
    <property type="project" value="InterPro"/>
</dbReference>
<dbReference type="GO" id="GO:0006412">
    <property type="term" value="P:translation"/>
    <property type="evidence" value="ECO:0007669"/>
    <property type="project" value="UniProtKB-UniRule"/>
</dbReference>
<dbReference type="CDD" id="cd00353">
    <property type="entry name" value="Ribosomal_S15p_S13e"/>
    <property type="match status" value="1"/>
</dbReference>
<dbReference type="FunFam" id="1.10.287.10:FF:000002">
    <property type="entry name" value="30S ribosomal protein S15"/>
    <property type="match status" value="1"/>
</dbReference>
<dbReference type="Gene3D" id="6.10.250.3130">
    <property type="match status" value="1"/>
</dbReference>
<dbReference type="Gene3D" id="1.10.287.10">
    <property type="entry name" value="S15/NS1, RNA-binding"/>
    <property type="match status" value="1"/>
</dbReference>
<dbReference type="HAMAP" id="MF_01343_B">
    <property type="entry name" value="Ribosomal_uS15_B"/>
    <property type="match status" value="1"/>
</dbReference>
<dbReference type="InterPro" id="IPR000589">
    <property type="entry name" value="Ribosomal_uS15"/>
</dbReference>
<dbReference type="InterPro" id="IPR005290">
    <property type="entry name" value="Ribosomal_uS15_bac-type"/>
</dbReference>
<dbReference type="InterPro" id="IPR009068">
    <property type="entry name" value="uS15_NS1_RNA-bd_sf"/>
</dbReference>
<dbReference type="NCBIfam" id="TIGR00952">
    <property type="entry name" value="S15_bact"/>
    <property type="match status" value="1"/>
</dbReference>
<dbReference type="PANTHER" id="PTHR23321">
    <property type="entry name" value="RIBOSOMAL PROTEIN S15, BACTERIAL AND ORGANELLAR"/>
    <property type="match status" value="1"/>
</dbReference>
<dbReference type="PANTHER" id="PTHR23321:SF26">
    <property type="entry name" value="SMALL RIBOSOMAL SUBUNIT PROTEIN US15M"/>
    <property type="match status" value="1"/>
</dbReference>
<dbReference type="Pfam" id="PF00312">
    <property type="entry name" value="Ribosomal_S15"/>
    <property type="match status" value="1"/>
</dbReference>
<dbReference type="SMART" id="SM01387">
    <property type="entry name" value="Ribosomal_S15"/>
    <property type="match status" value="1"/>
</dbReference>
<dbReference type="SUPFAM" id="SSF47060">
    <property type="entry name" value="S15/NS1 RNA-binding domain"/>
    <property type="match status" value="1"/>
</dbReference>
<dbReference type="PROSITE" id="PS00362">
    <property type="entry name" value="RIBOSOMAL_S15"/>
    <property type="match status" value="1"/>
</dbReference>
<reference key="1">
    <citation type="journal article" date="2005" name="Science">
        <title>Genome sequence of the PCE-dechlorinating bacterium Dehalococcoides ethenogenes.</title>
        <authorList>
            <person name="Seshadri R."/>
            <person name="Adrian L."/>
            <person name="Fouts D.E."/>
            <person name="Eisen J.A."/>
            <person name="Phillippy A.M."/>
            <person name="Methe B.A."/>
            <person name="Ward N.L."/>
            <person name="Nelson W.C."/>
            <person name="DeBoy R.T."/>
            <person name="Khouri H.M."/>
            <person name="Kolonay J.F."/>
            <person name="Dodson R.J."/>
            <person name="Daugherty S.C."/>
            <person name="Brinkac L.M."/>
            <person name="Sullivan S.A."/>
            <person name="Madupu R."/>
            <person name="Nelson K.E."/>
            <person name="Kang K.H."/>
            <person name="Impraim M."/>
            <person name="Tran K."/>
            <person name="Robinson J.M."/>
            <person name="Forberger H.A."/>
            <person name="Fraser C.M."/>
            <person name="Zinder S.H."/>
            <person name="Heidelberg J.F."/>
        </authorList>
    </citation>
    <scope>NUCLEOTIDE SEQUENCE [LARGE SCALE GENOMIC DNA]</scope>
    <source>
        <strain>ATCC BAA-2266 / KCTC 15142 / 195</strain>
    </source>
</reference>
<name>RS15_DEHM1</name>
<comment type="function">
    <text evidence="1">One of the primary rRNA binding proteins, it binds directly to 16S rRNA where it helps nucleate assembly of the platform of the 30S subunit by binding and bridging several RNA helices of the 16S rRNA.</text>
</comment>
<comment type="function">
    <text evidence="1">Forms an intersubunit bridge (bridge B4) with the 23S rRNA of the 50S subunit in the ribosome.</text>
</comment>
<comment type="subunit">
    <text evidence="1">Part of the 30S ribosomal subunit. Forms a bridge to the 50S subunit in the 70S ribosome, contacting the 23S rRNA.</text>
</comment>
<comment type="similarity">
    <text evidence="1">Belongs to the universal ribosomal protein uS15 family.</text>
</comment>
<organism>
    <name type="scientific">Dehalococcoides mccartyi (strain ATCC BAA-2266 / KCTC 15142 / 195)</name>
    <name type="common">Dehalococcoides ethenogenes (strain 195)</name>
    <dbReference type="NCBI Taxonomy" id="243164"/>
    <lineage>
        <taxon>Bacteria</taxon>
        <taxon>Bacillati</taxon>
        <taxon>Chloroflexota</taxon>
        <taxon>Dehalococcoidia</taxon>
        <taxon>Dehalococcoidales</taxon>
        <taxon>Dehalococcoidaceae</taxon>
        <taxon>Dehalococcoides</taxon>
    </lineage>
</organism>
<feature type="chain" id="PRO_0000115427" description="Small ribosomal subunit protein uS15">
    <location>
        <begin position="1"/>
        <end position="87"/>
    </location>
</feature>
<proteinExistence type="inferred from homology"/>
<evidence type="ECO:0000255" key="1">
    <source>
        <dbReference type="HAMAP-Rule" id="MF_01343"/>
    </source>
</evidence>
<evidence type="ECO:0000305" key="2"/>
<protein>
    <recommendedName>
        <fullName evidence="1">Small ribosomal subunit protein uS15</fullName>
    </recommendedName>
    <alternativeName>
        <fullName evidence="2">30S ribosomal protein S15</fullName>
    </alternativeName>
</protein>
<sequence length="87" mass="10035">MDKQEKSLIINEFKKSENDTGSTEVQVALLTARIHQLTTHMIANKHDFHTKRSLLTLVGRRRRLLSYMRNNNGAGYQELIANLGLRK</sequence>
<gene>
    <name evidence="1" type="primary">rpsO</name>
    <name type="ordered locus">DET0969</name>
</gene>